<feature type="peptide" id="PRO_0000044944" description="Toxin PBITx1" evidence="7">
    <location>
        <begin position="1"/>
        <end position="25" status="greater than"/>
    </location>
</feature>
<feature type="disulfide bond" evidence="1 3">
    <location>
        <begin position="2"/>
        <end position="19"/>
    </location>
</feature>
<feature type="disulfide bond" evidence="1 3">
    <location>
        <begin position="5"/>
        <end status="unknown"/>
    </location>
</feature>
<feature type="disulfide bond" evidence="1 3">
    <location>
        <begin position="16"/>
        <end status="unknown"/>
    </location>
</feature>
<feature type="disulfide bond" evidence="1 3">
    <location>
        <begin position="20"/>
        <end status="unknown"/>
    </location>
</feature>
<feature type="unsure residue" evidence="6">
    <location>
        <position position="19"/>
    </location>
</feature>
<feature type="non-terminal residue" evidence="6">
    <location>
        <position position="25"/>
    </location>
</feature>
<reference key="1">
    <citation type="journal article" date="1998" name="FEBS Lett.">
        <title>Purification and partial characterization of a 'short' insectotoxin-like peptide from the venom of the scorpion Parabuthus schlechteri.</title>
        <authorList>
            <person name="Tytgat J."/>
            <person name="Debont T."/>
            <person name="Rostoll K."/>
            <person name="Mueller G.J."/>
            <person name="Verdonck F."/>
            <person name="Daenens P."/>
            <person name="van der Walt J.J."/>
            <person name="Possani L.D."/>
        </authorList>
    </citation>
    <scope>PROTEIN SEQUENCE</scope>
    <scope>SUBCELLULAR LOCATION</scope>
    <source>
        <tissue>Venom</tissue>
    </source>
</reference>
<name>CTXL1_PARSC</name>
<organism>
    <name type="scientific">Parabuthus schlechteri</name>
    <name type="common">Scorpion</name>
    <dbReference type="NCBI Taxonomy" id="190110"/>
    <lineage>
        <taxon>Eukaryota</taxon>
        <taxon>Metazoa</taxon>
        <taxon>Ecdysozoa</taxon>
        <taxon>Arthropoda</taxon>
        <taxon>Chelicerata</taxon>
        <taxon>Arachnida</taxon>
        <taxon>Scorpiones</taxon>
        <taxon>Buthida</taxon>
        <taxon>Buthoidea</taxon>
        <taxon>Buthidae</taxon>
        <taxon>Parabuthus</taxon>
    </lineage>
</organism>
<proteinExistence type="evidence at protein level"/>
<protein>
    <recommendedName>
        <fullName evidence="5">Toxin PBITx1</fullName>
    </recommendedName>
    <alternativeName>
        <fullName evidence="5">sITx10</fullName>
    </alternativeName>
</protein>
<accession>P60271</accession>
<keyword id="KW-1265">Chloride channel impairing toxin</keyword>
<keyword id="KW-0903">Direct protein sequencing</keyword>
<keyword id="KW-1015">Disulfide bond</keyword>
<keyword id="KW-0872">Ion channel impairing toxin</keyword>
<keyword id="KW-0964">Secreted</keyword>
<keyword id="KW-0800">Toxin</keyword>
<keyword id="KW-0870">Voltage-gated chloride channel impairing toxin</keyword>
<dbReference type="TCDB" id="8.B.7.1.3">
    <property type="family name" value="the cl(-) channel peptide inhibitor (gatx1) family"/>
</dbReference>
<dbReference type="GO" id="GO:0005576">
    <property type="term" value="C:extracellular region"/>
    <property type="evidence" value="ECO:0007669"/>
    <property type="project" value="UniProtKB-SubCell"/>
</dbReference>
<dbReference type="GO" id="GO:0017081">
    <property type="term" value="F:chloride channel regulator activity"/>
    <property type="evidence" value="ECO:0007669"/>
    <property type="project" value="UniProtKB-KW"/>
</dbReference>
<dbReference type="GO" id="GO:0090729">
    <property type="term" value="F:toxin activity"/>
    <property type="evidence" value="ECO:0007669"/>
    <property type="project" value="UniProtKB-KW"/>
</dbReference>
<dbReference type="InterPro" id="IPR036574">
    <property type="entry name" value="Scorpion_toxin-like_sf"/>
</dbReference>
<dbReference type="InterPro" id="IPR007958">
    <property type="entry name" value="Scorpion_toxinS_Cl_inh"/>
</dbReference>
<dbReference type="Pfam" id="PF05294">
    <property type="entry name" value="Toxin_5"/>
    <property type="match status" value="1"/>
</dbReference>
<dbReference type="SUPFAM" id="SSF57095">
    <property type="entry name" value="Scorpion toxin-like"/>
    <property type="match status" value="1"/>
</dbReference>
<dbReference type="PROSITE" id="PS51200">
    <property type="entry name" value="SHORT_SCORPION_CHLORIDE"/>
    <property type="match status" value="1"/>
</dbReference>
<evidence type="ECO:0000250" key="1">
    <source>
        <dbReference type="UniProtKB" id="P15222"/>
    </source>
</evidence>
<evidence type="ECO:0000250" key="2">
    <source>
        <dbReference type="UniProtKB" id="Q9UAD0"/>
    </source>
</evidence>
<evidence type="ECO:0000255" key="3">
    <source>
        <dbReference type="PROSITE-ProRule" id="PRU00545"/>
    </source>
</evidence>
<evidence type="ECO:0000269" key="4">
    <source>
    </source>
</evidence>
<evidence type="ECO:0000303" key="5">
    <source>
    </source>
</evidence>
<evidence type="ECO:0000305" key="6"/>
<evidence type="ECO:0000305" key="7">
    <source>
    </source>
</evidence>
<comment type="function">
    <text evidence="2">Toxin with unknown function in healthy organisms. On glioma cells, interacts with chloride channels (probably ClC-3/CLCN3) and MMP2 at the surface of glioma cells. This complex is then internalized via caveolae, thus inhibiting the chloride channels necessary for cell shrinkage and tumor propagation.</text>
</comment>
<comment type="subcellular location">
    <subcellularLocation>
        <location evidence="4">Secreted</location>
    </subcellularLocation>
</comment>
<comment type="tissue specificity">
    <text evidence="7">Expressed by the venom gland.</text>
</comment>
<comment type="similarity">
    <text evidence="3">Belongs to the short scorpion toxin superfamily. Chloride channel inhibitor family.</text>
</comment>
<sequence>RCKPCFTTDPQMSKKCADCCGGXKX</sequence>